<accession>Q7NC34</accession>
<dbReference type="EC" id="6.1.1.6" evidence="1"/>
<dbReference type="EMBL" id="AE015450">
    <property type="protein sequence ID" value="AAP56425.2"/>
    <property type="molecule type" value="Genomic_DNA"/>
</dbReference>
<dbReference type="RefSeq" id="WP_011113304.1">
    <property type="nucleotide sequence ID" value="NC_004829.2"/>
</dbReference>
<dbReference type="SMR" id="Q7NC34"/>
<dbReference type="GeneID" id="93509895"/>
<dbReference type="KEGG" id="mga:MGA_0753"/>
<dbReference type="PATRIC" id="fig|233150.7.peg.79"/>
<dbReference type="HOGENOM" id="CLU_008255_6_0_14"/>
<dbReference type="OrthoDB" id="9801152at2"/>
<dbReference type="Proteomes" id="UP000001418">
    <property type="component" value="Chromosome"/>
</dbReference>
<dbReference type="GO" id="GO:0005829">
    <property type="term" value="C:cytosol"/>
    <property type="evidence" value="ECO:0007669"/>
    <property type="project" value="TreeGrafter"/>
</dbReference>
<dbReference type="GO" id="GO:0005524">
    <property type="term" value="F:ATP binding"/>
    <property type="evidence" value="ECO:0007669"/>
    <property type="project" value="UniProtKB-UniRule"/>
</dbReference>
<dbReference type="GO" id="GO:0004824">
    <property type="term" value="F:lysine-tRNA ligase activity"/>
    <property type="evidence" value="ECO:0007669"/>
    <property type="project" value="UniProtKB-UniRule"/>
</dbReference>
<dbReference type="GO" id="GO:0000287">
    <property type="term" value="F:magnesium ion binding"/>
    <property type="evidence" value="ECO:0007669"/>
    <property type="project" value="UniProtKB-UniRule"/>
</dbReference>
<dbReference type="GO" id="GO:0000049">
    <property type="term" value="F:tRNA binding"/>
    <property type="evidence" value="ECO:0007669"/>
    <property type="project" value="TreeGrafter"/>
</dbReference>
<dbReference type="GO" id="GO:0006430">
    <property type="term" value="P:lysyl-tRNA aminoacylation"/>
    <property type="evidence" value="ECO:0007669"/>
    <property type="project" value="UniProtKB-UniRule"/>
</dbReference>
<dbReference type="CDD" id="cd00775">
    <property type="entry name" value="LysRS_core"/>
    <property type="match status" value="1"/>
</dbReference>
<dbReference type="CDD" id="cd04322">
    <property type="entry name" value="LysRS_N"/>
    <property type="match status" value="1"/>
</dbReference>
<dbReference type="Gene3D" id="3.30.930.10">
    <property type="entry name" value="Bira Bifunctional Protein, Domain 2"/>
    <property type="match status" value="1"/>
</dbReference>
<dbReference type="Gene3D" id="2.40.50.140">
    <property type="entry name" value="Nucleic acid-binding proteins"/>
    <property type="match status" value="1"/>
</dbReference>
<dbReference type="HAMAP" id="MF_00252">
    <property type="entry name" value="Lys_tRNA_synth_class2"/>
    <property type="match status" value="1"/>
</dbReference>
<dbReference type="InterPro" id="IPR004364">
    <property type="entry name" value="Aa-tRNA-synt_II"/>
</dbReference>
<dbReference type="InterPro" id="IPR006195">
    <property type="entry name" value="aa-tRNA-synth_II"/>
</dbReference>
<dbReference type="InterPro" id="IPR045864">
    <property type="entry name" value="aa-tRNA-synth_II/BPL/LPL"/>
</dbReference>
<dbReference type="InterPro" id="IPR002313">
    <property type="entry name" value="Lys-tRNA-ligase_II"/>
</dbReference>
<dbReference type="InterPro" id="IPR044136">
    <property type="entry name" value="Lys-tRNA-ligase_II_N"/>
</dbReference>
<dbReference type="InterPro" id="IPR018149">
    <property type="entry name" value="Lys-tRNA-synth_II_C"/>
</dbReference>
<dbReference type="InterPro" id="IPR012340">
    <property type="entry name" value="NA-bd_OB-fold"/>
</dbReference>
<dbReference type="InterPro" id="IPR004365">
    <property type="entry name" value="NA-bd_OB_tRNA"/>
</dbReference>
<dbReference type="NCBIfam" id="TIGR00499">
    <property type="entry name" value="lysS_bact"/>
    <property type="match status" value="1"/>
</dbReference>
<dbReference type="NCBIfam" id="NF001756">
    <property type="entry name" value="PRK00484.1"/>
    <property type="match status" value="1"/>
</dbReference>
<dbReference type="PANTHER" id="PTHR42918:SF15">
    <property type="entry name" value="LYSINE--TRNA LIGASE, CHLOROPLASTIC_MITOCHONDRIAL"/>
    <property type="match status" value="1"/>
</dbReference>
<dbReference type="PANTHER" id="PTHR42918">
    <property type="entry name" value="LYSYL-TRNA SYNTHETASE"/>
    <property type="match status" value="1"/>
</dbReference>
<dbReference type="Pfam" id="PF00152">
    <property type="entry name" value="tRNA-synt_2"/>
    <property type="match status" value="1"/>
</dbReference>
<dbReference type="Pfam" id="PF01336">
    <property type="entry name" value="tRNA_anti-codon"/>
    <property type="match status" value="1"/>
</dbReference>
<dbReference type="PRINTS" id="PR00982">
    <property type="entry name" value="TRNASYNTHLYS"/>
</dbReference>
<dbReference type="SUPFAM" id="SSF55681">
    <property type="entry name" value="Class II aaRS and biotin synthetases"/>
    <property type="match status" value="1"/>
</dbReference>
<dbReference type="SUPFAM" id="SSF50249">
    <property type="entry name" value="Nucleic acid-binding proteins"/>
    <property type="match status" value="1"/>
</dbReference>
<dbReference type="PROSITE" id="PS50862">
    <property type="entry name" value="AA_TRNA_LIGASE_II"/>
    <property type="match status" value="1"/>
</dbReference>
<gene>
    <name evidence="1" type="primary">lysS</name>
    <name type="synonym">lysU</name>
    <name type="ordered locus">MYCGA0750</name>
    <name type="ORF">MGA_0753</name>
</gene>
<name>SYK_MYCGA</name>
<sequence length="492" mass="57296">MSKKLNDQELVRLDKLNRLIESKQNPYEVTKVANTHNTKSLKEKYDQFSKEQLAEMQLDKPITVSGRVILIRRTFILIQDFHSELQLYINKNKQPDLFKYFNDYLDLGDVVCATGKPMKTNTNELSLDLESLKIISKSLRVPPEKFHGIADEEIRSRKRYLDLVYNKESKERFVYRSKIIAAMRQYFNENGFLEVETPFLHAQIGGAAAKPFVTRYNALDRDYYLRIAPELPLKKLIVGSFEKIYEIGKCFRNEGMDSTHNPEFTSVETYVAYVDYIYMMELTEAIIKYIAKAIGISHTNIKNETIDWNKPFKRIKMTELVKQETGIDFTQVKKIDQALDLAKKHKVHVKEHEKTIGHIINLFFEEFCEKKLVEPTFVTHHPVEISPLSKLDYSDPRYTERFELFAFGKELANGFSELNDPIDQRQRFEKQLEEKQKGNDEASEMDEDFLEALENGLPPTGGLGIGVDRLVMMLTGTTSIRDILFFPHVREE</sequence>
<reference key="1">
    <citation type="journal article" date="2003" name="Microbiology">
        <title>The complete genome sequence of the avian pathogen Mycoplasma gallisepticum strain R(low).</title>
        <authorList>
            <person name="Papazisi L."/>
            <person name="Gorton T.S."/>
            <person name="Kutish G."/>
            <person name="Markham P.F."/>
            <person name="Browning G.F."/>
            <person name="Nguyen D.K."/>
            <person name="Swartzell S."/>
            <person name="Madan A."/>
            <person name="Mahairas G."/>
            <person name="Geary S.J."/>
        </authorList>
    </citation>
    <scope>NUCLEOTIDE SEQUENCE [LARGE SCALE GENOMIC DNA]</scope>
    <source>
        <strain>R(low / passage 15 / clone 2)</strain>
    </source>
</reference>
<comment type="catalytic activity">
    <reaction evidence="1">
        <text>tRNA(Lys) + L-lysine + ATP = L-lysyl-tRNA(Lys) + AMP + diphosphate</text>
        <dbReference type="Rhea" id="RHEA:20792"/>
        <dbReference type="Rhea" id="RHEA-COMP:9696"/>
        <dbReference type="Rhea" id="RHEA-COMP:9697"/>
        <dbReference type="ChEBI" id="CHEBI:30616"/>
        <dbReference type="ChEBI" id="CHEBI:32551"/>
        <dbReference type="ChEBI" id="CHEBI:33019"/>
        <dbReference type="ChEBI" id="CHEBI:78442"/>
        <dbReference type="ChEBI" id="CHEBI:78529"/>
        <dbReference type="ChEBI" id="CHEBI:456215"/>
        <dbReference type="EC" id="6.1.1.6"/>
    </reaction>
</comment>
<comment type="cofactor">
    <cofactor evidence="1">
        <name>Mg(2+)</name>
        <dbReference type="ChEBI" id="CHEBI:18420"/>
    </cofactor>
    <text evidence="1">Binds 3 Mg(2+) ions per subunit.</text>
</comment>
<comment type="subunit">
    <text evidence="1">Homodimer.</text>
</comment>
<comment type="subcellular location">
    <subcellularLocation>
        <location evidence="1">Cytoplasm</location>
    </subcellularLocation>
</comment>
<comment type="similarity">
    <text evidence="1">Belongs to the class-II aminoacyl-tRNA synthetase family.</text>
</comment>
<keyword id="KW-0030">Aminoacyl-tRNA synthetase</keyword>
<keyword id="KW-0067">ATP-binding</keyword>
<keyword id="KW-0963">Cytoplasm</keyword>
<keyword id="KW-0436">Ligase</keyword>
<keyword id="KW-0460">Magnesium</keyword>
<keyword id="KW-0479">Metal-binding</keyword>
<keyword id="KW-0547">Nucleotide-binding</keyword>
<keyword id="KW-0648">Protein biosynthesis</keyword>
<keyword id="KW-1185">Reference proteome</keyword>
<organism>
    <name type="scientific">Mycoplasmoides gallisepticum (strain R(low / passage 15 / clone 2))</name>
    <name type="common">Mycoplasma gallisepticum</name>
    <dbReference type="NCBI Taxonomy" id="710127"/>
    <lineage>
        <taxon>Bacteria</taxon>
        <taxon>Bacillati</taxon>
        <taxon>Mycoplasmatota</taxon>
        <taxon>Mycoplasmoidales</taxon>
        <taxon>Mycoplasmoidaceae</taxon>
        <taxon>Mycoplasmoides</taxon>
    </lineage>
</organism>
<protein>
    <recommendedName>
        <fullName evidence="1">Lysine--tRNA ligase</fullName>
        <ecNumber evidence="1">6.1.1.6</ecNumber>
    </recommendedName>
    <alternativeName>
        <fullName evidence="1">Lysyl-tRNA synthetase</fullName>
        <shortName evidence="1">LysRS</shortName>
    </alternativeName>
</protein>
<proteinExistence type="inferred from homology"/>
<feature type="chain" id="PRO_0000152645" description="Lysine--tRNA ligase">
    <location>
        <begin position="1"/>
        <end position="492"/>
    </location>
</feature>
<feature type="binding site" evidence="1">
    <location>
        <position position="403"/>
    </location>
    <ligand>
        <name>Mg(2+)</name>
        <dbReference type="ChEBI" id="CHEBI:18420"/>
        <label>1</label>
    </ligand>
</feature>
<feature type="binding site" evidence="1">
    <location>
        <position position="410"/>
    </location>
    <ligand>
        <name>Mg(2+)</name>
        <dbReference type="ChEBI" id="CHEBI:18420"/>
        <label>1</label>
    </ligand>
</feature>
<feature type="binding site" evidence="1">
    <location>
        <position position="410"/>
    </location>
    <ligand>
        <name>Mg(2+)</name>
        <dbReference type="ChEBI" id="CHEBI:18420"/>
        <label>2</label>
    </ligand>
</feature>
<evidence type="ECO:0000255" key="1">
    <source>
        <dbReference type="HAMAP-Rule" id="MF_00252"/>
    </source>
</evidence>